<evidence type="ECO:0000255" key="1">
    <source>
        <dbReference type="HAMAP-Rule" id="MF_01223"/>
    </source>
</evidence>
<protein>
    <recommendedName>
        <fullName evidence="1">UPF0212 protein VNG_1264C</fullName>
    </recommendedName>
</protein>
<gene>
    <name type="ordered locus">VNG_1264C</name>
</gene>
<keyword id="KW-1185">Reference proteome</keyword>
<sequence>MDCRVVVEAAVPVYDVQSTDEAVRIAISKTGEMLNPDLNYVEIEMGSRSCPHCGTDTEPAFVAADESLVALELSMTVFNVERDEHAARIARKEIGQRLANIPLAVLEVDTVTDDDTQESTGGDTETA</sequence>
<comment type="similarity">
    <text evidence="1">Belongs to the UPF0212 family.</text>
</comment>
<reference key="1">
    <citation type="journal article" date="2000" name="Proc. Natl. Acad. Sci. U.S.A.">
        <title>Genome sequence of Halobacterium species NRC-1.</title>
        <authorList>
            <person name="Ng W.V."/>
            <person name="Kennedy S.P."/>
            <person name="Mahairas G.G."/>
            <person name="Berquist B."/>
            <person name="Pan M."/>
            <person name="Shukla H.D."/>
            <person name="Lasky S.R."/>
            <person name="Baliga N.S."/>
            <person name="Thorsson V."/>
            <person name="Sbrogna J."/>
            <person name="Swartzell S."/>
            <person name="Weir D."/>
            <person name="Hall J."/>
            <person name="Dahl T.A."/>
            <person name="Welti R."/>
            <person name="Goo Y.A."/>
            <person name="Leithauser B."/>
            <person name="Keller K."/>
            <person name="Cruz R."/>
            <person name="Danson M.J."/>
            <person name="Hough D.W."/>
            <person name="Maddocks D.G."/>
            <person name="Jablonski P.E."/>
            <person name="Krebs M.P."/>
            <person name="Angevine C.M."/>
            <person name="Dale H."/>
            <person name="Isenbarger T.A."/>
            <person name="Peck R.F."/>
            <person name="Pohlschroder M."/>
            <person name="Spudich J.L."/>
            <person name="Jung K.-H."/>
            <person name="Alam M."/>
            <person name="Freitas T."/>
            <person name="Hou S."/>
            <person name="Daniels C.J."/>
            <person name="Dennis P.P."/>
            <person name="Omer A.D."/>
            <person name="Ebhardt H."/>
            <person name="Lowe T.M."/>
            <person name="Liang P."/>
            <person name="Riley M."/>
            <person name="Hood L."/>
            <person name="DasSarma S."/>
        </authorList>
    </citation>
    <scope>NUCLEOTIDE SEQUENCE [LARGE SCALE GENOMIC DNA]</scope>
    <source>
        <strain>ATCC 700922 / JCM 11081 / NRC-1</strain>
    </source>
</reference>
<accession>Q9HQ95</accession>
<organism>
    <name type="scientific">Halobacterium salinarum (strain ATCC 700922 / JCM 11081 / NRC-1)</name>
    <name type="common">Halobacterium halobium</name>
    <dbReference type="NCBI Taxonomy" id="64091"/>
    <lineage>
        <taxon>Archaea</taxon>
        <taxon>Methanobacteriati</taxon>
        <taxon>Methanobacteriota</taxon>
        <taxon>Stenosarchaea group</taxon>
        <taxon>Halobacteria</taxon>
        <taxon>Halobacteriales</taxon>
        <taxon>Halobacteriaceae</taxon>
        <taxon>Halobacterium</taxon>
        <taxon>Halobacterium salinarum NRC-34001</taxon>
    </lineage>
</organism>
<feature type="chain" id="PRO_0000068274" description="UPF0212 protein VNG_1264C">
    <location>
        <begin position="1"/>
        <end position="127"/>
    </location>
</feature>
<proteinExistence type="inferred from homology"/>
<name>Y1264_HALSA</name>
<dbReference type="EMBL" id="AE004437">
    <property type="protein sequence ID" value="AAG19621.1"/>
    <property type="molecule type" value="Genomic_DNA"/>
</dbReference>
<dbReference type="PIR" id="A84282">
    <property type="entry name" value="A84282"/>
</dbReference>
<dbReference type="RefSeq" id="WP_010902917.1">
    <property type="nucleotide sequence ID" value="NC_002607.1"/>
</dbReference>
<dbReference type="STRING" id="64091.VNG_1264C"/>
<dbReference type="PaxDb" id="64091-VNG_1264C"/>
<dbReference type="KEGG" id="hal:VNG_1264C"/>
<dbReference type="PATRIC" id="fig|64091.14.peg.971"/>
<dbReference type="HOGENOM" id="CLU_138334_0_0_2"/>
<dbReference type="InParanoid" id="Q9HQ95"/>
<dbReference type="OrthoDB" id="214737at2157"/>
<dbReference type="PhylomeDB" id="Q9HQ95"/>
<dbReference type="Proteomes" id="UP000000554">
    <property type="component" value="Chromosome"/>
</dbReference>
<dbReference type="HAMAP" id="MF_01223">
    <property type="entry name" value="UPF0212"/>
    <property type="match status" value="1"/>
</dbReference>
<dbReference type="InterPro" id="IPR007564">
    <property type="entry name" value="UPF0212"/>
</dbReference>
<dbReference type="NCBIfam" id="NF003035">
    <property type="entry name" value="PRK03922.1"/>
    <property type="match status" value="1"/>
</dbReference>
<dbReference type="PANTHER" id="PTHR42199">
    <property type="entry name" value="UPF0212 PROTEIN MJ0068"/>
    <property type="match status" value="1"/>
</dbReference>
<dbReference type="PANTHER" id="PTHR42199:SF1">
    <property type="entry name" value="UPF0212 PROTEIN TK1194"/>
    <property type="match status" value="1"/>
</dbReference>
<dbReference type="Pfam" id="PF04475">
    <property type="entry name" value="DUF555"/>
    <property type="match status" value="1"/>
</dbReference>
<dbReference type="PIRSF" id="PIRSF016934">
    <property type="entry name" value="UCP016934"/>
    <property type="match status" value="1"/>
</dbReference>